<gene>
    <name evidence="1" type="primary">proS</name>
    <name type="ordered locus">RALTA_A2699</name>
</gene>
<keyword id="KW-0030">Aminoacyl-tRNA synthetase</keyword>
<keyword id="KW-0067">ATP-binding</keyword>
<keyword id="KW-0963">Cytoplasm</keyword>
<keyword id="KW-0436">Ligase</keyword>
<keyword id="KW-0547">Nucleotide-binding</keyword>
<keyword id="KW-0648">Protein biosynthesis</keyword>
<name>SYP_CUPTR</name>
<reference key="1">
    <citation type="journal article" date="2008" name="Genome Res.">
        <title>Genome sequence of the beta-rhizobium Cupriavidus taiwanensis and comparative genomics of rhizobia.</title>
        <authorList>
            <person name="Amadou C."/>
            <person name="Pascal G."/>
            <person name="Mangenot S."/>
            <person name="Glew M."/>
            <person name="Bontemps C."/>
            <person name="Capela D."/>
            <person name="Carrere S."/>
            <person name="Cruveiller S."/>
            <person name="Dossat C."/>
            <person name="Lajus A."/>
            <person name="Marchetti M."/>
            <person name="Poinsot V."/>
            <person name="Rouy Z."/>
            <person name="Servin B."/>
            <person name="Saad M."/>
            <person name="Schenowitz C."/>
            <person name="Barbe V."/>
            <person name="Batut J."/>
            <person name="Medigue C."/>
            <person name="Masson-Boivin C."/>
        </authorList>
    </citation>
    <scope>NUCLEOTIDE SEQUENCE [LARGE SCALE GENOMIC DNA]</scope>
    <source>
        <strain>DSM 17343 / BCRC 17206 / CCUG 44338 / CIP 107171 / LMG 19424 / R1</strain>
    </source>
</reference>
<feature type="chain" id="PRO_1000199369" description="Proline--tRNA ligase">
    <location>
        <begin position="1"/>
        <end position="573"/>
    </location>
</feature>
<evidence type="ECO:0000255" key="1">
    <source>
        <dbReference type="HAMAP-Rule" id="MF_01569"/>
    </source>
</evidence>
<accession>B3R894</accession>
<organism>
    <name type="scientific">Cupriavidus taiwanensis (strain DSM 17343 / BCRC 17206 / CCUG 44338 / CIP 107171 / LMG 19424 / R1)</name>
    <name type="common">Ralstonia taiwanensis (strain LMG 19424)</name>
    <dbReference type="NCBI Taxonomy" id="977880"/>
    <lineage>
        <taxon>Bacteria</taxon>
        <taxon>Pseudomonadati</taxon>
        <taxon>Pseudomonadota</taxon>
        <taxon>Betaproteobacteria</taxon>
        <taxon>Burkholderiales</taxon>
        <taxon>Burkholderiaceae</taxon>
        <taxon>Cupriavidus</taxon>
    </lineage>
</organism>
<protein>
    <recommendedName>
        <fullName evidence="1">Proline--tRNA ligase</fullName>
        <ecNumber evidence="1">6.1.1.15</ecNumber>
    </recommendedName>
    <alternativeName>
        <fullName evidence="1">Prolyl-tRNA synthetase</fullName>
        <shortName evidence="1">ProRS</shortName>
    </alternativeName>
</protein>
<dbReference type="EC" id="6.1.1.15" evidence="1"/>
<dbReference type="EMBL" id="CU633749">
    <property type="protein sequence ID" value="CAQ70630.1"/>
    <property type="molecule type" value="Genomic_DNA"/>
</dbReference>
<dbReference type="RefSeq" id="WP_012353926.1">
    <property type="nucleotide sequence ID" value="NC_010528.1"/>
</dbReference>
<dbReference type="SMR" id="B3R894"/>
<dbReference type="GeneID" id="29762056"/>
<dbReference type="KEGG" id="cti:RALTA_A2699"/>
<dbReference type="eggNOG" id="COG0442">
    <property type="taxonomic scope" value="Bacteria"/>
</dbReference>
<dbReference type="HOGENOM" id="CLU_016739_0_0_4"/>
<dbReference type="BioCyc" id="CTAI977880:RALTA_RS13130-MONOMER"/>
<dbReference type="Proteomes" id="UP000001692">
    <property type="component" value="Chromosome 1"/>
</dbReference>
<dbReference type="GO" id="GO:0005829">
    <property type="term" value="C:cytosol"/>
    <property type="evidence" value="ECO:0007669"/>
    <property type="project" value="TreeGrafter"/>
</dbReference>
<dbReference type="GO" id="GO:0002161">
    <property type="term" value="F:aminoacyl-tRNA deacylase activity"/>
    <property type="evidence" value="ECO:0007669"/>
    <property type="project" value="InterPro"/>
</dbReference>
<dbReference type="GO" id="GO:0005524">
    <property type="term" value="F:ATP binding"/>
    <property type="evidence" value="ECO:0007669"/>
    <property type="project" value="UniProtKB-UniRule"/>
</dbReference>
<dbReference type="GO" id="GO:0004827">
    <property type="term" value="F:proline-tRNA ligase activity"/>
    <property type="evidence" value="ECO:0007669"/>
    <property type="project" value="UniProtKB-UniRule"/>
</dbReference>
<dbReference type="GO" id="GO:0006433">
    <property type="term" value="P:prolyl-tRNA aminoacylation"/>
    <property type="evidence" value="ECO:0007669"/>
    <property type="project" value="UniProtKB-UniRule"/>
</dbReference>
<dbReference type="CDD" id="cd04334">
    <property type="entry name" value="ProRS-INS"/>
    <property type="match status" value="1"/>
</dbReference>
<dbReference type="CDD" id="cd00861">
    <property type="entry name" value="ProRS_anticodon_short"/>
    <property type="match status" value="1"/>
</dbReference>
<dbReference type="CDD" id="cd00779">
    <property type="entry name" value="ProRS_core_prok"/>
    <property type="match status" value="1"/>
</dbReference>
<dbReference type="FunFam" id="3.30.930.10:FF:000012">
    <property type="entry name" value="Proline--tRNA ligase"/>
    <property type="match status" value="1"/>
</dbReference>
<dbReference type="FunFam" id="3.30.930.10:FF:000097">
    <property type="entry name" value="Proline--tRNA ligase"/>
    <property type="match status" value="1"/>
</dbReference>
<dbReference type="Gene3D" id="3.40.50.800">
    <property type="entry name" value="Anticodon-binding domain"/>
    <property type="match status" value="1"/>
</dbReference>
<dbReference type="Gene3D" id="3.30.930.10">
    <property type="entry name" value="Bira Bifunctional Protein, Domain 2"/>
    <property type="match status" value="2"/>
</dbReference>
<dbReference type="Gene3D" id="3.90.960.10">
    <property type="entry name" value="YbaK/aminoacyl-tRNA synthetase-associated domain"/>
    <property type="match status" value="1"/>
</dbReference>
<dbReference type="HAMAP" id="MF_01569">
    <property type="entry name" value="Pro_tRNA_synth_type1"/>
    <property type="match status" value="1"/>
</dbReference>
<dbReference type="InterPro" id="IPR002314">
    <property type="entry name" value="aa-tRNA-synt_IIb"/>
</dbReference>
<dbReference type="InterPro" id="IPR006195">
    <property type="entry name" value="aa-tRNA-synth_II"/>
</dbReference>
<dbReference type="InterPro" id="IPR045864">
    <property type="entry name" value="aa-tRNA-synth_II/BPL/LPL"/>
</dbReference>
<dbReference type="InterPro" id="IPR004154">
    <property type="entry name" value="Anticodon-bd"/>
</dbReference>
<dbReference type="InterPro" id="IPR036621">
    <property type="entry name" value="Anticodon-bd_dom_sf"/>
</dbReference>
<dbReference type="InterPro" id="IPR002316">
    <property type="entry name" value="Pro-tRNA-ligase_IIa"/>
</dbReference>
<dbReference type="InterPro" id="IPR004500">
    <property type="entry name" value="Pro-tRNA-synth_IIa_bac-type"/>
</dbReference>
<dbReference type="InterPro" id="IPR023717">
    <property type="entry name" value="Pro-tRNA-Synthase_IIa_type1"/>
</dbReference>
<dbReference type="InterPro" id="IPR050062">
    <property type="entry name" value="Pro-tRNA_synthetase"/>
</dbReference>
<dbReference type="InterPro" id="IPR044140">
    <property type="entry name" value="ProRS_anticodon_short"/>
</dbReference>
<dbReference type="InterPro" id="IPR033730">
    <property type="entry name" value="ProRS_core_prok"/>
</dbReference>
<dbReference type="InterPro" id="IPR036754">
    <property type="entry name" value="YbaK/aa-tRNA-synt-asso_dom_sf"/>
</dbReference>
<dbReference type="InterPro" id="IPR007214">
    <property type="entry name" value="YbaK/aa-tRNA-synth-assoc-dom"/>
</dbReference>
<dbReference type="NCBIfam" id="NF006625">
    <property type="entry name" value="PRK09194.1"/>
    <property type="match status" value="1"/>
</dbReference>
<dbReference type="NCBIfam" id="TIGR00409">
    <property type="entry name" value="proS_fam_II"/>
    <property type="match status" value="1"/>
</dbReference>
<dbReference type="PANTHER" id="PTHR42753">
    <property type="entry name" value="MITOCHONDRIAL RIBOSOME PROTEIN L39/PROLYL-TRNA LIGASE FAMILY MEMBER"/>
    <property type="match status" value="1"/>
</dbReference>
<dbReference type="PANTHER" id="PTHR42753:SF2">
    <property type="entry name" value="PROLINE--TRNA LIGASE"/>
    <property type="match status" value="1"/>
</dbReference>
<dbReference type="Pfam" id="PF03129">
    <property type="entry name" value="HGTP_anticodon"/>
    <property type="match status" value="1"/>
</dbReference>
<dbReference type="Pfam" id="PF00587">
    <property type="entry name" value="tRNA-synt_2b"/>
    <property type="match status" value="1"/>
</dbReference>
<dbReference type="Pfam" id="PF04073">
    <property type="entry name" value="tRNA_edit"/>
    <property type="match status" value="1"/>
</dbReference>
<dbReference type="PIRSF" id="PIRSF001535">
    <property type="entry name" value="ProRS_1"/>
    <property type="match status" value="1"/>
</dbReference>
<dbReference type="PRINTS" id="PR01046">
    <property type="entry name" value="TRNASYNTHPRO"/>
</dbReference>
<dbReference type="SUPFAM" id="SSF52954">
    <property type="entry name" value="Class II aaRS ABD-related"/>
    <property type="match status" value="1"/>
</dbReference>
<dbReference type="SUPFAM" id="SSF55681">
    <property type="entry name" value="Class II aaRS and biotin synthetases"/>
    <property type="match status" value="1"/>
</dbReference>
<dbReference type="SUPFAM" id="SSF55826">
    <property type="entry name" value="YbaK/ProRS associated domain"/>
    <property type="match status" value="1"/>
</dbReference>
<dbReference type="PROSITE" id="PS50862">
    <property type="entry name" value="AA_TRNA_LIGASE_II"/>
    <property type="match status" value="1"/>
</dbReference>
<proteinExistence type="inferred from homology"/>
<comment type="function">
    <text evidence="1">Catalyzes the attachment of proline to tRNA(Pro) in a two-step reaction: proline is first activated by ATP to form Pro-AMP and then transferred to the acceptor end of tRNA(Pro). As ProRS can inadvertently accommodate and process non-cognate amino acids such as alanine and cysteine, to avoid such errors it has two additional distinct editing activities against alanine. One activity is designated as 'pretransfer' editing and involves the tRNA(Pro)-independent hydrolysis of activated Ala-AMP. The other activity is designated 'posttransfer' editing and involves deacylation of mischarged Ala-tRNA(Pro). The misacylated Cys-tRNA(Pro) is not edited by ProRS.</text>
</comment>
<comment type="catalytic activity">
    <reaction evidence="1">
        <text>tRNA(Pro) + L-proline + ATP = L-prolyl-tRNA(Pro) + AMP + diphosphate</text>
        <dbReference type="Rhea" id="RHEA:14305"/>
        <dbReference type="Rhea" id="RHEA-COMP:9700"/>
        <dbReference type="Rhea" id="RHEA-COMP:9702"/>
        <dbReference type="ChEBI" id="CHEBI:30616"/>
        <dbReference type="ChEBI" id="CHEBI:33019"/>
        <dbReference type="ChEBI" id="CHEBI:60039"/>
        <dbReference type="ChEBI" id="CHEBI:78442"/>
        <dbReference type="ChEBI" id="CHEBI:78532"/>
        <dbReference type="ChEBI" id="CHEBI:456215"/>
        <dbReference type="EC" id="6.1.1.15"/>
    </reaction>
</comment>
<comment type="subunit">
    <text evidence="1">Homodimer.</text>
</comment>
<comment type="subcellular location">
    <subcellularLocation>
        <location evidence="1">Cytoplasm</location>
    </subcellularLocation>
</comment>
<comment type="domain">
    <text evidence="1">Consists of three domains: the N-terminal catalytic domain, the editing domain and the C-terminal anticodon-binding domain.</text>
</comment>
<comment type="similarity">
    <text evidence="1">Belongs to the class-II aminoacyl-tRNA synthetase family. ProS type 1 subfamily.</text>
</comment>
<sequence>MKASQFFISTLKEAPADAEIVSHKLMMRAGMIKKLGAGIYNYMPIGLRVIRKVENIVREEMNRAGAVELSMPVIQPAELWQETGRWDKMGPELLRLKDRHERDFAVQPTSEEVVTDIARSEIRSYKQLPVNFYQIQTKFRDERRPRFGIMRGREFTMKDAYSFDRDTDGLRKSYENMYDAYVRIFRRFGLEFRAVAADNGAIGGSGSHEFHVIAETGEDAIVYCPTSAYAANMEAAEALPLVAERAAPTQDLVKTFTPEKVKCEQVAEFLNIPLETNVKSIVLATDSDAGPQIWLLLIRADHELNEVKASKVPGLAEFRFATENEIVEAFGSPPGYLGPIDMKKPVKVVADRTVANMSDFVCGANYRDYHYTGVNWGRDLPEPIVADLRNVVAGDASPDGQGTLEICRGIEVGHVFMLGTRYSESMNATFLDENGKTQPMQMGCYGIGITRILGAAIEQNFDERGIIWPAAIAPFAVVICPVGYDRSEAVKAEADRIHAELLAAGVDVILDDRGERPGVMFADWELIGVPHRVVVGDRGLKEGKVEYQGRRDAQATAVSVAEVVGHVRSLLAN</sequence>